<reference key="1">
    <citation type="journal article" date="1994" name="Genomics">
        <title>Structure of the human 4-hydroxyphenylpyruvic acid dioxygenase gene (HPD).</title>
        <authorList>
            <person name="Awata H."/>
            <person name="Endo F."/>
            <person name="Matsuda I."/>
        </authorList>
    </citation>
    <scope>NUCLEOTIDE SEQUENCE [GENOMIC DNA] (ISOFORM 1)</scope>
    <scope>VARIANT ALA-33</scope>
</reference>
<reference key="2">
    <citation type="journal article" date="1995" name="Cytogenet. Cell Genet.">
        <title>Regional assignment of the human 4-hydroxyphenylpyruvate dioxygenase gene (HPD) to 12q24--&gt;qter by fluorescence in situ hybridization.</title>
        <authorList>
            <person name="Stenman G."/>
            <person name="Roijer E."/>
            <person name="Rueetschi U."/>
            <person name="Dellsen A."/>
            <person name="Rymo L."/>
            <person name="Lindstedt S."/>
        </authorList>
    </citation>
    <scope>NUCLEOTIDE SEQUENCE [MRNA] (ISOFORM 1)</scope>
    <scope>VARIANT ALA-33</scope>
</reference>
<reference key="3">
    <citation type="journal article" date="1997" name="Genomics">
        <title>Human 4-hydroxyphenylpyruvate dioxygenase gene (HPD).</title>
        <authorList>
            <person name="Ruetschi U."/>
            <person name="Rymo L."/>
            <person name="Lindstedt S."/>
        </authorList>
    </citation>
    <scope>NUCLEOTIDE SEQUENCE [GENOMIC DNA] (ISOFORM 1)</scope>
    <scope>VARIANT ALA-33</scope>
</reference>
<reference key="4">
    <citation type="journal article" date="2004" name="Nat. Genet.">
        <title>Complete sequencing and characterization of 21,243 full-length human cDNAs.</title>
        <authorList>
            <person name="Ota T."/>
            <person name="Suzuki Y."/>
            <person name="Nishikawa T."/>
            <person name="Otsuki T."/>
            <person name="Sugiyama T."/>
            <person name="Irie R."/>
            <person name="Wakamatsu A."/>
            <person name="Hayashi K."/>
            <person name="Sato H."/>
            <person name="Nagai K."/>
            <person name="Kimura K."/>
            <person name="Makita H."/>
            <person name="Sekine M."/>
            <person name="Obayashi M."/>
            <person name="Nishi T."/>
            <person name="Shibahara T."/>
            <person name="Tanaka T."/>
            <person name="Ishii S."/>
            <person name="Yamamoto J."/>
            <person name="Saito K."/>
            <person name="Kawai Y."/>
            <person name="Isono Y."/>
            <person name="Nakamura Y."/>
            <person name="Nagahari K."/>
            <person name="Murakami K."/>
            <person name="Yasuda T."/>
            <person name="Iwayanagi T."/>
            <person name="Wagatsuma M."/>
            <person name="Shiratori A."/>
            <person name="Sudo H."/>
            <person name="Hosoiri T."/>
            <person name="Kaku Y."/>
            <person name="Kodaira H."/>
            <person name="Kondo H."/>
            <person name="Sugawara M."/>
            <person name="Takahashi M."/>
            <person name="Kanda K."/>
            <person name="Yokoi T."/>
            <person name="Furuya T."/>
            <person name="Kikkawa E."/>
            <person name="Omura Y."/>
            <person name="Abe K."/>
            <person name="Kamihara K."/>
            <person name="Katsuta N."/>
            <person name="Sato K."/>
            <person name="Tanikawa M."/>
            <person name="Yamazaki M."/>
            <person name="Ninomiya K."/>
            <person name="Ishibashi T."/>
            <person name="Yamashita H."/>
            <person name="Murakawa K."/>
            <person name="Fujimori K."/>
            <person name="Tanai H."/>
            <person name="Kimata M."/>
            <person name="Watanabe M."/>
            <person name="Hiraoka S."/>
            <person name="Chiba Y."/>
            <person name="Ishida S."/>
            <person name="Ono Y."/>
            <person name="Takiguchi S."/>
            <person name="Watanabe S."/>
            <person name="Yosida M."/>
            <person name="Hotuta T."/>
            <person name="Kusano J."/>
            <person name="Kanehori K."/>
            <person name="Takahashi-Fujii A."/>
            <person name="Hara H."/>
            <person name="Tanase T.-O."/>
            <person name="Nomura Y."/>
            <person name="Togiya S."/>
            <person name="Komai F."/>
            <person name="Hara R."/>
            <person name="Takeuchi K."/>
            <person name="Arita M."/>
            <person name="Imose N."/>
            <person name="Musashino K."/>
            <person name="Yuuki H."/>
            <person name="Oshima A."/>
            <person name="Sasaki N."/>
            <person name="Aotsuka S."/>
            <person name="Yoshikawa Y."/>
            <person name="Matsunawa H."/>
            <person name="Ichihara T."/>
            <person name="Shiohata N."/>
            <person name="Sano S."/>
            <person name="Moriya S."/>
            <person name="Momiyama H."/>
            <person name="Satoh N."/>
            <person name="Takami S."/>
            <person name="Terashima Y."/>
            <person name="Suzuki O."/>
            <person name="Nakagawa S."/>
            <person name="Senoh A."/>
            <person name="Mizoguchi H."/>
            <person name="Goto Y."/>
            <person name="Shimizu F."/>
            <person name="Wakebe H."/>
            <person name="Hishigaki H."/>
            <person name="Watanabe T."/>
            <person name="Sugiyama A."/>
            <person name="Takemoto M."/>
            <person name="Kawakami B."/>
            <person name="Yamazaki M."/>
            <person name="Watanabe K."/>
            <person name="Kumagai A."/>
            <person name="Itakura S."/>
            <person name="Fukuzumi Y."/>
            <person name="Fujimori Y."/>
            <person name="Komiyama M."/>
            <person name="Tashiro H."/>
            <person name="Tanigami A."/>
            <person name="Fujiwara T."/>
            <person name="Ono T."/>
            <person name="Yamada K."/>
            <person name="Fujii Y."/>
            <person name="Ozaki K."/>
            <person name="Hirao M."/>
            <person name="Ohmori Y."/>
            <person name="Kawabata A."/>
            <person name="Hikiji T."/>
            <person name="Kobatake N."/>
            <person name="Inagaki H."/>
            <person name="Ikema Y."/>
            <person name="Okamoto S."/>
            <person name="Okitani R."/>
            <person name="Kawakami T."/>
            <person name="Noguchi S."/>
            <person name="Itoh T."/>
            <person name="Shigeta K."/>
            <person name="Senba T."/>
            <person name="Matsumura K."/>
            <person name="Nakajima Y."/>
            <person name="Mizuno T."/>
            <person name="Morinaga M."/>
            <person name="Sasaki M."/>
            <person name="Togashi T."/>
            <person name="Oyama M."/>
            <person name="Hata H."/>
            <person name="Watanabe M."/>
            <person name="Komatsu T."/>
            <person name="Mizushima-Sugano J."/>
            <person name="Satoh T."/>
            <person name="Shirai Y."/>
            <person name="Takahashi Y."/>
            <person name="Nakagawa K."/>
            <person name="Okumura K."/>
            <person name="Nagase T."/>
            <person name="Nomura N."/>
            <person name="Kikuchi H."/>
            <person name="Masuho Y."/>
            <person name="Yamashita R."/>
            <person name="Nakai K."/>
            <person name="Yada T."/>
            <person name="Nakamura Y."/>
            <person name="Ohara O."/>
            <person name="Isogai T."/>
            <person name="Sugano S."/>
        </authorList>
    </citation>
    <scope>NUCLEOTIDE SEQUENCE [LARGE SCALE MRNA] (ISOFORMS 1 AND 2)</scope>
    <scope>VARIANT ALA-33</scope>
    <source>
        <tissue>Liver</tissue>
        <tissue>Testis</tissue>
    </source>
</reference>
<reference key="5">
    <citation type="journal article" date="2006" name="Nature">
        <title>The finished DNA sequence of human chromosome 12.</title>
        <authorList>
            <person name="Scherer S.E."/>
            <person name="Muzny D.M."/>
            <person name="Buhay C.J."/>
            <person name="Chen R."/>
            <person name="Cree A."/>
            <person name="Ding Y."/>
            <person name="Dugan-Rocha S."/>
            <person name="Gill R."/>
            <person name="Gunaratne P."/>
            <person name="Harris R.A."/>
            <person name="Hawes A.C."/>
            <person name="Hernandez J."/>
            <person name="Hodgson A.V."/>
            <person name="Hume J."/>
            <person name="Jackson A."/>
            <person name="Khan Z.M."/>
            <person name="Kovar-Smith C."/>
            <person name="Lewis L.R."/>
            <person name="Lozado R.J."/>
            <person name="Metzker M.L."/>
            <person name="Milosavljevic A."/>
            <person name="Miner G.R."/>
            <person name="Montgomery K.T."/>
            <person name="Morgan M.B."/>
            <person name="Nazareth L.V."/>
            <person name="Scott G."/>
            <person name="Sodergren E."/>
            <person name="Song X.-Z."/>
            <person name="Steffen D."/>
            <person name="Lovering R.C."/>
            <person name="Wheeler D.A."/>
            <person name="Worley K.C."/>
            <person name="Yuan Y."/>
            <person name="Zhang Z."/>
            <person name="Adams C.Q."/>
            <person name="Ansari-Lari M.A."/>
            <person name="Ayele M."/>
            <person name="Brown M.J."/>
            <person name="Chen G."/>
            <person name="Chen Z."/>
            <person name="Clerc-Blankenburg K.P."/>
            <person name="Davis C."/>
            <person name="Delgado O."/>
            <person name="Dinh H.H."/>
            <person name="Draper H."/>
            <person name="Gonzalez-Garay M.L."/>
            <person name="Havlak P."/>
            <person name="Jackson L.R."/>
            <person name="Jacob L.S."/>
            <person name="Kelly S.H."/>
            <person name="Li L."/>
            <person name="Li Z."/>
            <person name="Liu J."/>
            <person name="Liu W."/>
            <person name="Lu J."/>
            <person name="Maheshwari M."/>
            <person name="Nguyen B.-V."/>
            <person name="Okwuonu G.O."/>
            <person name="Pasternak S."/>
            <person name="Perez L.M."/>
            <person name="Plopper F.J.H."/>
            <person name="Santibanez J."/>
            <person name="Shen H."/>
            <person name="Tabor P.E."/>
            <person name="Verduzco D."/>
            <person name="Waldron L."/>
            <person name="Wang Q."/>
            <person name="Williams G.A."/>
            <person name="Zhang J."/>
            <person name="Zhou J."/>
            <person name="Allen C.C."/>
            <person name="Amin A.G."/>
            <person name="Anyalebechi V."/>
            <person name="Bailey M."/>
            <person name="Barbaria J.A."/>
            <person name="Bimage K.E."/>
            <person name="Bryant N.P."/>
            <person name="Burch P.E."/>
            <person name="Burkett C.E."/>
            <person name="Burrell K.L."/>
            <person name="Calderon E."/>
            <person name="Cardenas V."/>
            <person name="Carter K."/>
            <person name="Casias K."/>
            <person name="Cavazos I."/>
            <person name="Cavazos S.R."/>
            <person name="Ceasar H."/>
            <person name="Chacko J."/>
            <person name="Chan S.N."/>
            <person name="Chavez D."/>
            <person name="Christopoulos C."/>
            <person name="Chu J."/>
            <person name="Cockrell R."/>
            <person name="Cox C.D."/>
            <person name="Dang M."/>
            <person name="Dathorne S.R."/>
            <person name="David R."/>
            <person name="Davis C.M."/>
            <person name="Davy-Carroll L."/>
            <person name="Deshazo D.R."/>
            <person name="Donlin J.E."/>
            <person name="D'Souza L."/>
            <person name="Eaves K.A."/>
            <person name="Egan A."/>
            <person name="Emery-Cohen A.J."/>
            <person name="Escotto M."/>
            <person name="Flagg N."/>
            <person name="Forbes L.D."/>
            <person name="Gabisi A.M."/>
            <person name="Garza M."/>
            <person name="Hamilton C."/>
            <person name="Henderson N."/>
            <person name="Hernandez O."/>
            <person name="Hines S."/>
            <person name="Hogues M.E."/>
            <person name="Huang M."/>
            <person name="Idlebird D.G."/>
            <person name="Johnson R."/>
            <person name="Jolivet A."/>
            <person name="Jones S."/>
            <person name="Kagan R."/>
            <person name="King L.M."/>
            <person name="Leal B."/>
            <person name="Lebow H."/>
            <person name="Lee S."/>
            <person name="LeVan J.M."/>
            <person name="Lewis L.C."/>
            <person name="London P."/>
            <person name="Lorensuhewa L.M."/>
            <person name="Loulseged H."/>
            <person name="Lovett D.A."/>
            <person name="Lucier A."/>
            <person name="Lucier R.L."/>
            <person name="Ma J."/>
            <person name="Madu R.C."/>
            <person name="Mapua P."/>
            <person name="Martindale A.D."/>
            <person name="Martinez E."/>
            <person name="Massey E."/>
            <person name="Mawhiney S."/>
            <person name="Meador M.G."/>
            <person name="Mendez S."/>
            <person name="Mercado C."/>
            <person name="Mercado I.C."/>
            <person name="Merritt C.E."/>
            <person name="Miner Z.L."/>
            <person name="Minja E."/>
            <person name="Mitchell T."/>
            <person name="Mohabbat F."/>
            <person name="Mohabbat K."/>
            <person name="Montgomery B."/>
            <person name="Moore N."/>
            <person name="Morris S."/>
            <person name="Munidasa M."/>
            <person name="Ngo R.N."/>
            <person name="Nguyen N.B."/>
            <person name="Nickerson E."/>
            <person name="Nwaokelemeh O.O."/>
            <person name="Nwokenkwo S."/>
            <person name="Obregon M."/>
            <person name="Oguh M."/>
            <person name="Oragunye N."/>
            <person name="Oviedo R.J."/>
            <person name="Parish B.J."/>
            <person name="Parker D.N."/>
            <person name="Parrish J."/>
            <person name="Parks K.L."/>
            <person name="Paul H.A."/>
            <person name="Payton B.A."/>
            <person name="Perez A."/>
            <person name="Perrin W."/>
            <person name="Pickens A."/>
            <person name="Primus E.L."/>
            <person name="Pu L.-L."/>
            <person name="Puazo M."/>
            <person name="Quiles M.M."/>
            <person name="Quiroz J.B."/>
            <person name="Rabata D."/>
            <person name="Reeves K."/>
            <person name="Ruiz S.J."/>
            <person name="Shao H."/>
            <person name="Sisson I."/>
            <person name="Sonaike T."/>
            <person name="Sorelle R.P."/>
            <person name="Sutton A.E."/>
            <person name="Svatek A.F."/>
            <person name="Svetz L.A."/>
            <person name="Tamerisa K.S."/>
            <person name="Taylor T.R."/>
            <person name="Teague B."/>
            <person name="Thomas N."/>
            <person name="Thorn R.D."/>
            <person name="Trejos Z.Y."/>
            <person name="Trevino B.K."/>
            <person name="Ukegbu O.N."/>
            <person name="Urban J.B."/>
            <person name="Vasquez L.I."/>
            <person name="Vera V.A."/>
            <person name="Villasana D.M."/>
            <person name="Wang L."/>
            <person name="Ward-Moore S."/>
            <person name="Warren J.T."/>
            <person name="Wei X."/>
            <person name="White F."/>
            <person name="Williamson A.L."/>
            <person name="Wleczyk R."/>
            <person name="Wooden H.S."/>
            <person name="Wooden S.H."/>
            <person name="Yen J."/>
            <person name="Yoon L."/>
            <person name="Yoon V."/>
            <person name="Zorrilla S.E."/>
            <person name="Nelson D."/>
            <person name="Kucherlapati R."/>
            <person name="Weinstock G."/>
            <person name="Gibbs R.A."/>
        </authorList>
    </citation>
    <scope>NUCLEOTIDE SEQUENCE [LARGE SCALE GENOMIC DNA]</scope>
</reference>
<reference key="6">
    <citation type="submission" date="2005-07" db="EMBL/GenBank/DDBJ databases">
        <authorList>
            <person name="Mural R.J."/>
            <person name="Istrail S."/>
            <person name="Sutton G.G."/>
            <person name="Florea L."/>
            <person name="Halpern A.L."/>
            <person name="Mobarry C.M."/>
            <person name="Lippert R."/>
            <person name="Walenz B."/>
            <person name="Shatkay H."/>
            <person name="Dew I."/>
            <person name="Miller J.R."/>
            <person name="Flanigan M.J."/>
            <person name="Edwards N.J."/>
            <person name="Bolanos R."/>
            <person name="Fasulo D."/>
            <person name="Halldorsson B.V."/>
            <person name="Hannenhalli S."/>
            <person name="Turner R."/>
            <person name="Yooseph S."/>
            <person name="Lu F."/>
            <person name="Nusskern D.R."/>
            <person name="Shue B.C."/>
            <person name="Zheng X.H."/>
            <person name="Zhong F."/>
            <person name="Delcher A.L."/>
            <person name="Huson D.H."/>
            <person name="Kravitz S.A."/>
            <person name="Mouchard L."/>
            <person name="Reinert K."/>
            <person name="Remington K.A."/>
            <person name="Clark A.G."/>
            <person name="Waterman M.S."/>
            <person name="Eichler E.E."/>
            <person name="Adams M.D."/>
            <person name="Hunkapiller M.W."/>
            <person name="Myers E.W."/>
            <person name="Venter J.C."/>
        </authorList>
    </citation>
    <scope>NUCLEOTIDE SEQUENCE [LARGE SCALE GENOMIC DNA]</scope>
    <scope>VARIANT ALA-33</scope>
</reference>
<reference key="7">
    <citation type="journal article" date="2004" name="Genome Res.">
        <title>The status, quality, and expansion of the NIH full-length cDNA project: the Mammalian Gene Collection (MGC).</title>
        <authorList>
            <consortium name="The MGC Project Team"/>
        </authorList>
    </citation>
    <scope>NUCLEOTIDE SEQUENCE [LARGE SCALE MRNA] (ISOFORM 1)</scope>
    <scope>VARIANT ALA-33</scope>
    <source>
        <tissue>Liver</tissue>
    </source>
</reference>
<reference key="8">
    <citation type="journal article" date="1992" name="J. Biol. Chem.">
        <title>Primary structure deduced from complementary DNA sequence and expression in cultured cells of mammalian 4-hydroxyphenylpyruvic acid dioxygenase. Evidence that the enzyme is a homodimer of identical subunits homologous to rat liver-specific alloantigen F.</title>
        <authorList>
            <person name="Endo F."/>
            <person name="Awata H."/>
            <person name="Tanoue A."/>
            <person name="Ishiguro M."/>
            <person name="Eda Y."/>
            <person name="Titani K."/>
            <person name="Matsuda I."/>
        </authorList>
    </citation>
    <scope>FUNCTION</scope>
    <scope>CATALYTIC ACTIVITY</scope>
    <scope>SUBUNIT</scope>
</reference>
<reference key="9">
    <citation type="journal article" date="2011" name="BMC Syst. Biol.">
        <title>Initial characterization of the human central proteome.</title>
        <authorList>
            <person name="Burkard T.R."/>
            <person name="Planyavsky M."/>
            <person name="Kaupe I."/>
            <person name="Breitwieser F.P."/>
            <person name="Buerckstuemmer T."/>
            <person name="Bennett K.L."/>
            <person name="Superti-Furga G."/>
            <person name="Colinge J."/>
        </authorList>
    </citation>
    <scope>IDENTIFICATION BY MASS SPECTROMETRY [LARGE SCALE ANALYSIS]</scope>
</reference>
<reference key="10">
    <citation type="journal article" date="2012" name="Proc. Natl. Acad. Sci. U.S.A.">
        <title>N-terminal acetylome analyses and functional insights of the N-terminal acetyltransferase NatB.</title>
        <authorList>
            <person name="Van Damme P."/>
            <person name="Lasa M."/>
            <person name="Polevoda B."/>
            <person name="Gazquez C."/>
            <person name="Elosegui-Artola A."/>
            <person name="Kim D.S."/>
            <person name="De Juan-Pardo E."/>
            <person name="Demeyer K."/>
            <person name="Hole K."/>
            <person name="Larrea E."/>
            <person name="Timmerman E."/>
            <person name="Prieto J."/>
            <person name="Arnesen T."/>
            <person name="Sherman F."/>
            <person name="Gevaert K."/>
            <person name="Aldabe R."/>
        </authorList>
    </citation>
    <scope>ACETYLATION [LARGE SCALE ANALYSIS] AT THR-2</scope>
    <scope>CLEAVAGE OF INITIATOR METHIONINE [LARGE SCALE ANALYSIS]</scope>
    <scope>IDENTIFICATION BY MASS SPECTROMETRY [LARGE SCALE ANALYSIS]</scope>
</reference>
<reference key="11">
    <citation type="journal article" date="2014" name="J. Proteomics">
        <title>An enzyme assisted RP-RPLC approach for in-depth analysis of human liver phosphoproteome.</title>
        <authorList>
            <person name="Bian Y."/>
            <person name="Song C."/>
            <person name="Cheng K."/>
            <person name="Dong M."/>
            <person name="Wang F."/>
            <person name="Huang J."/>
            <person name="Sun D."/>
            <person name="Wang L."/>
            <person name="Ye M."/>
            <person name="Zou H."/>
        </authorList>
    </citation>
    <scope>PHOSPHORYLATION [LARGE SCALE ANALYSIS] AT SER-211</scope>
    <scope>IDENTIFICATION BY MASS SPECTROMETRY [LARGE SCALE ANALYSIS]</scope>
    <source>
        <tissue>Liver</tissue>
    </source>
</reference>
<reference key="12">
    <citation type="submission" date="2009-09" db="PDB data bank">
        <title>Crystal structure of human 4-hydroxyphenylpyruvate dioxygenase.</title>
        <authorList>
            <consortium name="Structural genomics consortium (SGC)"/>
        </authorList>
    </citation>
    <scope>X-RAY CRYSTALLOGRAPHY (1.75 ANGSTROMS) OF 8-393 IN COMPLEX WITH COBALT IONS</scope>
</reference>
<reference key="13">
    <citation type="journal article" date="2000" name="Hum. Genet.">
        <title>Mutations in the 4-hydroxyphenylpyruvate dioxygenase gene (HPD) in patients with tyrosinemia type III.</title>
        <authorList>
            <person name="Rueetschi U."/>
            <person name="Cerone R."/>
            <person name="Perez-Cerda C."/>
            <person name="Schiaffino M.C."/>
            <person name="Standing S."/>
            <person name="Ugarte M."/>
            <person name="Holme E."/>
        </authorList>
    </citation>
    <scope>VARIANTS TYRSN3 CYS-160 AND MET-335</scope>
    <scope>VARIANTS ALA-33; PHE-267 AND LEU-340</scope>
</reference>
<reference key="14">
    <citation type="journal article" date="2000" name="Mol. Genet. Metab.">
        <title>Mutations in the 4-hydroxyphenylpyruvic acid dioxygenase gene are responsible for tyrosinemia type III and hawkinsinuria.</title>
        <authorList>
            <person name="Tomoeda K."/>
            <person name="Awata H."/>
            <person name="Matsuura T."/>
            <person name="Matsuda I."/>
            <person name="Ploechl E."/>
            <person name="Milovac T."/>
            <person name="Boneh A."/>
            <person name="Scott C.R."/>
            <person name="Danks D.M."/>
            <person name="Endo F."/>
        </authorList>
    </citation>
    <scope>VARIANT TYRSN3 VAL-268</scope>
    <scope>VARIANT ALA-33</scope>
</reference>
<keyword id="KW-0002">3D-structure</keyword>
<keyword id="KW-0007">Acetylation</keyword>
<keyword id="KW-0025">Alternative splicing</keyword>
<keyword id="KW-0963">Cytoplasm</keyword>
<keyword id="KW-0223">Dioxygenase</keyword>
<keyword id="KW-0225">Disease variant</keyword>
<keyword id="KW-0256">Endoplasmic reticulum</keyword>
<keyword id="KW-0333">Golgi apparatus</keyword>
<keyword id="KW-0991">Intellectual disability</keyword>
<keyword id="KW-0408">Iron</keyword>
<keyword id="KW-0472">Membrane</keyword>
<keyword id="KW-0479">Metal-binding</keyword>
<keyword id="KW-0560">Oxidoreductase</keyword>
<keyword id="KW-0585">Phenylalanine catabolism</keyword>
<keyword id="KW-0597">Phosphoprotein</keyword>
<keyword id="KW-1267">Proteomics identification</keyword>
<keyword id="KW-1185">Reference proteome</keyword>
<keyword id="KW-0677">Repeat</keyword>
<keyword id="KW-0828">Tyrosine catabolism</keyword>
<sequence length="393" mass="44964">MTTYSDKGAKPERGRFLHFHSVTFWVGNAKQATSFYCSKMGFEPLAYRGLETGSREVVSHVIKQGKIVFVLSSALNPWNKEMGDHLVKHGDGVKDIAFEVEDCDYIVQKARERGAKIMREPWVEQDKFGKVKFAVLQTYGDTTHTLVEKMNYIGQFLPGYEAPAFMDPLLPKLPKCSLEMIDHIVGNQPDQEMVSASEWYLKNLQFHRFWSVDDTQVHTEYSSLRSIVVANYEESIKMPINEPAPGKKKSQIQEYVDYNGGAGVQHIALKTEDIITAIRHLRERGLEFLSVPSTYYKQLREKLKTAKIKVKENIDALEELKILVDYDEKGYLLQIFTKPVQDRPTLFLEVIQRHNHQGFGAGNFNSLFKAFEEEQNLRGNLTNMETNGVVPGM</sequence>
<dbReference type="EC" id="1.13.11.27" evidence="6"/>
<dbReference type="EMBL" id="D31628">
    <property type="protein sequence ID" value="BAA06498.1"/>
    <property type="molecule type" value="Genomic_DNA"/>
</dbReference>
<dbReference type="EMBL" id="X72389">
    <property type="protein sequence ID" value="CAA51082.1"/>
    <property type="molecule type" value="mRNA"/>
</dbReference>
<dbReference type="EMBL" id="U29895">
    <property type="protein sequence ID" value="AAC73008.1"/>
    <property type="molecule type" value="Genomic_DNA"/>
</dbReference>
<dbReference type="EMBL" id="AK057510">
    <property type="protein sequence ID" value="BAG51925.1"/>
    <property type="molecule type" value="mRNA"/>
</dbReference>
<dbReference type="EMBL" id="AK290826">
    <property type="protein sequence ID" value="BAF83515.1"/>
    <property type="molecule type" value="mRNA"/>
</dbReference>
<dbReference type="EMBL" id="AC069503">
    <property type="status" value="NOT_ANNOTATED_CDS"/>
    <property type="molecule type" value="Genomic_DNA"/>
</dbReference>
<dbReference type="EMBL" id="AC079360">
    <property type="status" value="NOT_ANNOTATED_CDS"/>
    <property type="molecule type" value="Genomic_DNA"/>
</dbReference>
<dbReference type="EMBL" id="CH471054">
    <property type="protein sequence ID" value="EAW98292.1"/>
    <property type="molecule type" value="Genomic_DNA"/>
</dbReference>
<dbReference type="EMBL" id="BC024287">
    <property type="protein sequence ID" value="AAH24287.1"/>
    <property type="molecule type" value="mRNA"/>
</dbReference>
<dbReference type="CCDS" id="CCDS53839.1">
    <molecule id="P32754-2"/>
</dbReference>
<dbReference type="CCDS" id="CCDS9224.1">
    <molecule id="P32754-1"/>
</dbReference>
<dbReference type="PIR" id="S32458">
    <property type="entry name" value="S32458"/>
</dbReference>
<dbReference type="RefSeq" id="NP_001165464.1">
    <molecule id="P32754-2"/>
    <property type="nucleotide sequence ID" value="NM_001171993.2"/>
</dbReference>
<dbReference type="RefSeq" id="NP_002141.2">
    <molecule id="P32754-1"/>
    <property type="nucleotide sequence ID" value="NM_002150.3"/>
</dbReference>
<dbReference type="PDB" id="3ISQ">
    <property type="method" value="X-ray"/>
    <property type="resolution" value="1.75 A"/>
    <property type="chains" value="A=8-393"/>
</dbReference>
<dbReference type="PDB" id="5EC3">
    <property type="method" value="X-ray"/>
    <property type="resolution" value="2.10 A"/>
    <property type="chains" value="A=1-393"/>
</dbReference>
<dbReference type="PDB" id="8IM2">
    <property type="method" value="X-ray"/>
    <property type="resolution" value="2.81 A"/>
    <property type="chains" value="A/B/C/D/E/F=1-393"/>
</dbReference>
<dbReference type="PDB" id="8IM3">
    <property type="method" value="X-ray"/>
    <property type="resolution" value="2.78 A"/>
    <property type="chains" value="A/B/C/D/E/F=1-393"/>
</dbReference>
<dbReference type="PDBsum" id="3ISQ"/>
<dbReference type="PDBsum" id="5EC3"/>
<dbReference type="PDBsum" id="8IM2"/>
<dbReference type="PDBsum" id="8IM3"/>
<dbReference type="SMR" id="P32754"/>
<dbReference type="BioGRID" id="109482">
    <property type="interactions" value="20"/>
</dbReference>
<dbReference type="CORUM" id="P32754"/>
<dbReference type="FunCoup" id="P32754">
    <property type="interactions" value="346"/>
</dbReference>
<dbReference type="IntAct" id="P32754">
    <property type="interactions" value="7"/>
</dbReference>
<dbReference type="STRING" id="9606.ENSP00000289004"/>
<dbReference type="BindingDB" id="P32754"/>
<dbReference type="ChEMBL" id="CHEMBL1861"/>
<dbReference type="DrugBank" id="DB14511">
    <property type="generic name" value="Acetate"/>
</dbReference>
<dbReference type="DrugBank" id="DB02850">
    <property type="generic name" value="DAS869"/>
</dbReference>
<dbReference type="DrugBank" id="DB00348">
    <property type="generic name" value="Nitisinone"/>
</dbReference>
<dbReference type="DrugCentral" id="P32754"/>
<dbReference type="GlyGen" id="P32754">
    <property type="glycosylation" value="1 site, 1 O-linked glycan (1 site)"/>
</dbReference>
<dbReference type="iPTMnet" id="P32754"/>
<dbReference type="PhosphoSitePlus" id="P32754"/>
<dbReference type="BioMuta" id="HPD"/>
<dbReference type="DMDM" id="417144"/>
<dbReference type="jPOST" id="P32754"/>
<dbReference type="MassIVE" id="P32754"/>
<dbReference type="PaxDb" id="9606-ENSP00000289004"/>
<dbReference type="PeptideAtlas" id="P32754"/>
<dbReference type="ProteomicsDB" id="3550"/>
<dbReference type="ProteomicsDB" id="54881">
    <molecule id="P32754-1"/>
</dbReference>
<dbReference type="Pumba" id="P32754"/>
<dbReference type="Antibodypedia" id="31595">
    <property type="antibodies" value="327 antibodies from 32 providers"/>
</dbReference>
<dbReference type="DNASU" id="3242"/>
<dbReference type="Ensembl" id="ENST00000289004.8">
    <molecule id="P32754-1"/>
    <property type="protein sequence ID" value="ENSP00000289004.4"/>
    <property type="gene ID" value="ENSG00000158104.11"/>
</dbReference>
<dbReference type="Ensembl" id="ENST00000543163.5">
    <molecule id="P32754-2"/>
    <property type="protein sequence ID" value="ENSP00000441677.1"/>
    <property type="gene ID" value="ENSG00000158104.11"/>
</dbReference>
<dbReference type="GeneID" id="3242"/>
<dbReference type="KEGG" id="hsa:3242"/>
<dbReference type="MANE-Select" id="ENST00000289004.8">
    <property type="protein sequence ID" value="ENSP00000289004.4"/>
    <property type="RefSeq nucleotide sequence ID" value="NM_002150.3"/>
    <property type="RefSeq protein sequence ID" value="NP_002141.2"/>
</dbReference>
<dbReference type="UCSC" id="uc058ujk.1">
    <molecule id="P32754-1"/>
    <property type="organism name" value="human"/>
</dbReference>
<dbReference type="AGR" id="HGNC:5147"/>
<dbReference type="CTD" id="3242"/>
<dbReference type="DisGeNET" id="3242"/>
<dbReference type="GeneCards" id="HPD"/>
<dbReference type="HGNC" id="HGNC:5147">
    <property type="gene designation" value="HPD"/>
</dbReference>
<dbReference type="HPA" id="ENSG00000158104">
    <property type="expression patterns" value="Tissue enriched (liver)"/>
</dbReference>
<dbReference type="MalaCards" id="HPD"/>
<dbReference type="MIM" id="140350">
    <property type="type" value="phenotype"/>
</dbReference>
<dbReference type="MIM" id="276710">
    <property type="type" value="phenotype"/>
</dbReference>
<dbReference type="MIM" id="609695">
    <property type="type" value="gene"/>
</dbReference>
<dbReference type="neXtProt" id="NX_P32754"/>
<dbReference type="OpenTargets" id="ENSG00000158104"/>
<dbReference type="Orphanet" id="2118">
    <property type="disease" value="Hawkinsinuria"/>
</dbReference>
<dbReference type="Orphanet" id="69723">
    <property type="disease" value="Tyrosinemia type 3"/>
</dbReference>
<dbReference type="PharmGKB" id="PA29420"/>
<dbReference type="VEuPathDB" id="HostDB:ENSG00000158104"/>
<dbReference type="eggNOG" id="KOG0638">
    <property type="taxonomic scope" value="Eukaryota"/>
</dbReference>
<dbReference type="GeneTree" id="ENSGT00530000063474"/>
<dbReference type="HOGENOM" id="CLU_034004_3_1_1"/>
<dbReference type="InParanoid" id="P32754"/>
<dbReference type="OMA" id="DPFPVKG"/>
<dbReference type="OrthoDB" id="414569at2759"/>
<dbReference type="PAN-GO" id="P32754">
    <property type="GO annotations" value="4 GO annotations based on evolutionary models"/>
</dbReference>
<dbReference type="PhylomeDB" id="P32754"/>
<dbReference type="BioCyc" id="MetaCyc:HS08267-MONOMER"/>
<dbReference type="BRENDA" id="1.13.11.27">
    <property type="organism ID" value="2681"/>
</dbReference>
<dbReference type="PathwayCommons" id="P32754"/>
<dbReference type="Reactome" id="R-HSA-8963684">
    <property type="pathway name" value="Tyrosine catabolism"/>
</dbReference>
<dbReference type="SignaLink" id="P32754"/>
<dbReference type="SIGNOR" id="P32754"/>
<dbReference type="UniPathway" id="UPA00139">
    <property type="reaction ID" value="UER00362"/>
</dbReference>
<dbReference type="BioGRID-ORCS" id="3242">
    <property type="hits" value="24 hits in 1156 CRISPR screens"/>
</dbReference>
<dbReference type="ChiTaRS" id="HPD">
    <property type="organism name" value="human"/>
</dbReference>
<dbReference type="EvolutionaryTrace" id="P32754"/>
<dbReference type="GenomeRNAi" id="3242"/>
<dbReference type="Pharos" id="P32754">
    <property type="development level" value="Tclin"/>
</dbReference>
<dbReference type="PRO" id="PR:P32754"/>
<dbReference type="Proteomes" id="UP000005640">
    <property type="component" value="Chromosome 12"/>
</dbReference>
<dbReference type="RNAct" id="P32754">
    <property type="molecule type" value="protein"/>
</dbReference>
<dbReference type="Bgee" id="ENSG00000158104">
    <property type="expression patterns" value="Expressed in right lobe of liver and 104 other cell types or tissues"/>
</dbReference>
<dbReference type="ExpressionAtlas" id="P32754">
    <property type="expression patterns" value="baseline and differential"/>
</dbReference>
<dbReference type="GO" id="GO:0005829">
    <property type="term" value="C:cytosol"/>
    <property type="evidence" value="ECO:0000304"/>
    <property type="project" value="Reactome"/>
</dbReference>
<dbReference type="GO" id="GO:0005789">
    <property type="term" value="C:endoplasmic reticulum membrane"/>
    <property type="evidence" value="ECO:0000318"/>
    <property type="project" value="GO_Central"/>
</dbReference>
<dbReference type="GO" id="GO:0070062">
    <property type="term" value="C:extracellular exosome"/>
    <property type="evidence" value="ECO:0007005"/>
    <property type="project" value="UniProtKB"/>
</dbReference>
<dbReference type="GO" id="GO:0000139">
    <property type="term" value="C:Golgi membrane"/>
    <property type="evidence" value="ECO:0000318"/>
    <property type="project" value="GO_Central"/>
</dbReference>
<dbReference type="GO" id="GO:0003868">
    <property type="term" value="F:4-hydroxyphenylpyruvate dioxygenase activity"/>
    <property type="evidence" value="ECO:0000314"/>
    <property type="project" value="UniProtKB"/>
</dbReference>
<dbReference type="GO" id="GO:0046872">
    <property type="term" value="F:metal ion binding"/>
    <property type="evidence" value="ECO:0007669"/>
    <property type="project" value="UniProtKB-KW"/>
</dbReference>
<dbReference type="GO" id="GO:0042803">
    <property type="term" value="F:protein homodimerization activity"/>
    <property type="evidence" value="ECO:0000314"/>
    <property type="project" value="UniProtKB"/>
</dbReference>
<dbReference type="GO" id="GO:0006559">
    <property type="term" value="P:L-phenylalanine catabolic process"/>
    <property type="evidence" value="ECO:0007669"/>
    <property type="project" value="UniProtKB-UniPathway"/>
</dbReference>
<dbReference type="GO" id="GO:0006572">
    <property type="term" value="P:tyrosine catabolic process"/>
    <property type="evidence" value="ECO:0000314"/>
    <property type="project" value="MGI"/>
</dbReference>
<dbReference type="CDD" id="cd07250">
    <property type="entry name" value="HPPD_C_like"/>
    <property type="match status" value="1"/>
</dbReference>
<dbReference type="CDD" id="cd08342">
    <property type="entry name" value="HPPD_N_like"/>
    <property type="match status" value="1"/>
</dbReference>
<dbReference type="FunFam" id="3.10.180.10:FF:000008">
    <property type="entry name" value="4-hydroxyphenylpyruvate dioxygenase"/>
    <property type="match status" value="1"/>
</dbReference>
<dbReference type="FunFam" id="3.10.180.10:FF:000022">
    <property type="entry name" value="4-hydroxyphenylpyruvate dioxygenase"/>
    <property type="match status" value="1"/>
</dbReference>
<dbReference type="Gene3D" id="3.10.180.10">
    <property type="entry name" value="2,3-Dihydroxybiphenyl 1,2-Dioxygenase, domain 1"/>
    <property type="match status" value="2"/>
</dbReference>
<dbReference type="InterPro" id="IPR005956">
    <property type="entry name" value="4OHPhenylPyrv_dOase"/>
</dbReference>
<dbReference type="InterPro" id="IPR041735">
    <property type="entry name" value="4OHPhenylPyrv_dOase_C"/>
</dbReference>
<dbReference type="InterPro" id="IPR041736">
    <property type="entry name" value="4OHPhenylPyrv_dOase_N"/>
</dbReference>
<dbReference type="InterPro" id="IPR029068">
    <property type="entry name" value="Glyas_Bleomycin-R_OHBP_Dase"/>
</dbReference>
<dbReference type="InterPro" id="IPR004360">
    <property type="entry name" value="Glyas_Fos-R_dOase_dom"/>
</dbReference>
<dbReference type="InterPro" id="IPR037523">
    <property type="entry name" value="VOC"/>
</dbReference>
<dbReference type="NCBIfam" id="TIGR01263">
    <property type="entry name" value="4HPPD"/>
    <property type="match status" value="1"/>
</dbReference>
<dbReference type="PANTHER" id="PTHR11959">
    <property type="entry name" value="4-HYDROXYPHENYLPYRUVATE DIOXYGENASE"/>
    <property type="match status" value="1"/>
</dbReference>
<dbReference type="PANTHER" id="PTHR11959:SF12">
    <property type="entry name" value="4-HYDROXYPHENYLPYRUVATE DIOXYGENASE"/>
    <property type="match status" value="1"/>
</dbReference>
<dbReference type="Pfam" id="PF00903">
    <property type="entry name" value="Glyoxalase"/>
    <property type="match status" value="2"/>
</dbReference>
<dbReference type="PIRSF" id="PIRSF009283">
    <property type="entry name" value="HPP_dOase"/>
    <property type="match status" value="1"/>
</dbReference>
<dbReference type="SUPFAM" id="SSF54593">
    <property type="entry name" value="Glyoxalase/Bleomycin resistance protein/Dihydroxybiphenyl dioxygenase"/>
    <property type="match status" value="1"/>
</dbReference>
<dbReference type="PROSITE" id="PS51819">
    <property type="entry name" value="VOC"/>
    <property type="match status" value="2"/>
</dbReference>
<organism>
    <name type="scientific">Homo sapiens</name>
    <name type="common">Human</name>
    <dbReference type="NCBI Taxonomy" id="9606"/>
    <lineage>
        <taxon>Eukaryota</taxon>
        <taxon>Metazoa</taxon>
        <taxon>Chordata</taxon>
        <taxon>Craniata</taxon>
        <taxon>Vertebrata</taxon>
        <taxon>Euteleostomi</taxon>
        <taxon>Mammalia</taxon>
        <taxon>Eutheria</taxon>
        <taxon>Euarchontoglires</taxon>
        <taxon>Primates</taxon>
        <taxon>Haplorrhini</taxon>
        <taxon>Catarrhini</taxon>
        <taxon>Hominidae</taxon>
        <taxon>Homo</taxon>
    </lineage>
</organism>
<proteinExistence type="evidence at protein level"/>
<comment type="function">
    <text evidence="6">Catalyzes the conversion of 4-hydroxyphenylpyruvic acid to homogentisic acid, one of the steps in tyrosine catabolism.</text>
</comment>
<comment type="catalytic activity">
    <reaction evidence="6">
        <text>3-(4-hydroxyphenyl)pyruvate + O2 = homogentisate + CO2</text>
        <dbReference type="Rhea" id="RHEA:16189"/>
        <dbReference type="ChEBI" id="CHEBI:15379"/>
        <dbReference type="ChEBI" id="CHEBI:16169"/>
        <dbReference type="ChEBI" id="CHEBI:16526"/>
        <dbReference type="ChEBI" id="CHEBI:36242"/>
        <dbReference type="EC" id="1.13.11.27"/>
    </reaction>
    <physiologicalReaction direction="left-to-right" evidence="16">
        <dbReference type="Rhea" id="RHEA:16190"/>
    </physiologicalReaction>
</comment>
<comment type="cofactor">
    <cofactor evidence="1">
        <name>Fe cation</name>
        <dbReference type="ChEBI" id="CHEBI:24875"/>
    </cofactor>
    <text evidence="1">Binds 1 Fe cation per subunit.</text>
</comment>
<comment type="pathway">
    <text>Amino-acid degradation; L-phenylalanine degradation; acetoacetate and fumarate from L-phenylalanine: step 3/6.</text>
</comment>
<comment type="subunit">
    <text evidence="6 12">Homodimer.</text>
</comment>
<comment type="subcellular location">
    <subcellularLocation>
        <location evidence="1">Cytoplasm</location>
    </subcellularLocation>
    <subcellularLocation>
        <location evidence="1">Endoplasmic reticulum membrane</location>
        <topology evidence="1">Peripheral membrane protein</topology>
    </subcellularLocation>
    <subcellularLocation>
        <location evidence="1">Golgi apparatus membrane</location>
        <topology evidence="1">Peripheral membrane protein</topology>
    </subcellularLocation>
</comment>
<comment type="alternative products">
    <event type="alternative splicing"/>
    <isoform>
        <id>P32754-1</id>
        <name>1</name>
        <sequence type="displayed"/>
    </isoform>
    <isoform>
        <id>P32754-2</id>
        <name>2</name>
        <sequence type="described" ref="VSP_044302"/>
    </isoform>
</comment>
<comment type="disease" evidence="4 5">
    <disease id="DI-01109">
        <name>Tyrosinemia 3</name>
        <acronym>TYRSN3</acronym>
        <description>An inborn error of metabolism characterized by elevations of tyrosine in the blood and urine, seizures and mild intellectual disability.</description>
        <dbReference type="MIM" id="276710"/>
    </disease>
    <text>The disease is caused by variants affecting the gene represented in this entry.</text>
</comment>
<comment type="disease" evidence="5">
    <disease id="DI-00540">
        <name>Hawkinsinuria</name>
        <acronym>HWKS</acronym>
        <description>An inborn error of tyrosine metabolism characterized by failure to thrive, persistent metabolic acidosis, fine and sparse hair, and excretion of the unusual cyclic amino acid metabolite, hawkinsin, in the urine.</description>
        <dbReference type="MIM" id="140350"/>
    </disease>
    <text>The disease is caused by variants affecting the gene represented in this entry.</text>
</comment>
<comment type="similarity">
    <text evidence="15">Belongs to the 4HPPD family.</text>
</comment>
<name>HPPD_HUMAN</name>
<gene>
    <name type="primary">HPD</name>
    <name type="synonym">PPD</name>
</gene>
<protein>
    <recommendedName>
        <fullName>4-hydroxyphenylpyruvate dioxygenase</fullName>
        <ecNumber evidence="6">1.13.11.27</ecNumber>
    </recommendedName>
    <alternativeName>
        <fullName>4-hydroxyphenylpyruvic acid oxidase</fullName>
        <shortName>4HPPD</shortName>
        <shortName>HPD</shortName>
        <shortName>HPPDase</shortName>
    </alternativeName>
</protein>
<evidence type="ECO:0000250" key="1">
    <source>
        <dbReference type="UniProtKB" id="P32755"/>
    </source>
</evidence>
<evidence type="ECO:0000250" key="2">
    <source>
        <dbReference type="UniProtKB" id="P49429"/>
    </source>
</evidence>
<evidence type="ECO:0000255" key="3">
    <source>
        <dbReference type="PROSITE-ProRule" id="PRU01163"/>
    </source>
</evidence>
<evidence type="ECO:0000269" key="4">
    <source>
    </source>
</evidence>
<evidence type="ECO:0000269" key="5">
    <source>
    </source>
</evidence>
<evidence type="ECO:0000269" key="6">
    <source>
    </source>
</evidence>
<evidence type="ECO:0000269" key="7">
    <source>
    </source>
</evidence>
<evidence type="ECO:0000269" key="8">
    <source>
    </source>
</evidence>
<evidence type="ECO:0000269" key="9">
    <source>
    </source>
</evidence>
<evidence type="ECO:0000269" key="10">
    <source>
    </source>
</evidence>
<evidence type="ECO:0000269" key="11">
    <source>
    </source>
</evidence>
<evidence type="ECO:0000269" key="12">
    <source ref="12"/>
</evidence>
<evidence type="ECO:0000269" key="13">
    <source ref="6"/>
</evidence>
<evidence type="ECO:0000303" key="14">
    <source>
    </source>
</evidence>
<evidence type="ECO:0000305" key="15"/>
<evidence type="ECO:0000305" key="16">
    <source>
    </source>
</evidence>
<evidence type="ECO:0007744" key="17">
    <source>
    </source>
</evidence>
<evidence type="ECO:0007744" key="18">
    <source>
    </source>
</evidence>
<evidence type="ECO:0007829" key="19">
    <source>
        <dbReference type="PDB" id="3ISQ"/>
    </source>
</evidence>
<evidence type="ECO:0007829" key="20">
    <source>
        <dbReference type="PDB" id="8IM3"/>
    </source>
</evidence>
<feature type="initiator methionine" description="Removed" evidence="17">
    <location>
        <position position="1"/>
    </location>
</feature>
<feature type="chain" id="PRO_0000088388" description="4-hydroxyphenylpyruvate dioxygenase">
    <location>
        <begin position="2"/>
        <end position="393"/>
    </location>
</feature>
<feature type="domain" description="VOC 1" evidence="3">
    <location>
        <begin position="18"/>
        <end position="149"/>
    </location>
</feature>
<feature type="domain" description="VOC 2" evidence="3">
    <location>
        <begin position="180"/>
        <end position="338"/>
    </location>
</feature>
<feature type="binding site" evidence="15">
    <location>
        <position position="183"/>
    </location>
    <ligand>
        <name>Fe cation</name>
        <dbReference type="ChEBI" id="CHEBI:24875"/>
    </ligand>
</feature>
<feature type="binding site" evidence="15">
    <location>
        <position position="266"/>
    </location>
    <ligand>
        <name>Fe cation</name>
        <dbReference type="ChEBI" id="CHEBI:24875"/>
    </ligand>
</feature>
<feature type="binding site" evidence="15">
    <location>
        <position position="349"/>
    </location>
    <ligand>
        <name>Fe cation</name>
        <dbReference type="ChEBI" id="CHEBI:24875"/>
    </ligand>
</feature>
<feature type="modified residue" description="N-acetylthreonine" evidence="17">
    <location>
        <position position="2"/>
    </location>
</feature>
<feature type="modified residue" description="N6-succinyllysine" evidence="2">
    <location>
        <position position="132"/>
    </location>
</feature>
<feature type="modified residue" description="Phosphoserine" evidence="18">
    <location>
        <position position="211"/>
    </location>
</feature>
<feature type="modified residue" description="Phosphoserine" evidence="2">
    <location>
        <position position="226"/>
    </location>
</feature>
<feature type="modified residue" description="Phosphoserine" evidence="2">
    <location>
        <position position="250"/>
    </location>
</feature>
<feature type="splice variant" id="VSP_044302" description="In isoform 2." evidence="14">
    <location>
        <begin position="1"/>
        <end position="39"/>
    </location>
</feature>
<feature type="sequence variant" id="VAR_015444" description="In dbSNP:rs1154510." evidence="4 5 7 8 9 10 11 13">
    <original>T</original>
    <variation>A</variation>
    <location>
        <position position="33"/>
    </location>
</feature>
<feature type="sequence variant" id="VAR_048101" description="In dbSNP:rs11833399.">
    <original>R</original>
    <variation>Q</variation>
    <location>
        <position position="113"/>
    </location>
</feature>
<feature type="sequence variant" id="VAR_015445" description="In TYRSN3; dbSNP:rs137852865." evidence="4">
    <original>Y</original>
    <variation>C</variation>
    <location>
        <position position="160"/>
    </location>
</feature>
<feature type="sequence variant" id="VAR_015446" evidence="4">
    <original>I</original>
    <variation>F</variation>
    <location>
        <position position="267"/>
    </location>
</feature>
<feature type="sequence variant" id="VAR_015447" description="In TYRSN3." evidence="5">
    <original>A</original>
    <variation>V</variation>
    <location>
        <position position="268"/>
    </location>
</feature>
<feature type="sequence variant" id="VAR_015448" description="In TYRSN3; dbSNP:rs137852868." evidence="4">
    <original>I</original>
    <variation>M</variation>
    <location>
        <position position="335"/>
    </location>
</feature>
<feature type="sequence variant" id="VAR_015449" description="In dbSNP:rs36023382." evidence="4">
    <original>V</original>
    <variation>L</variation>
    <location>
        <position position="340"/>
    </location>
</feature>
<feature type="sequence conflict" description="In Ref. 3; AAC73008." evidence="15" ref="3">
    <original>A</original>
    <variation>P</variation>
    <location>
        <position position="162"/>
    </location>
</feature>
<feature type="strand" evidence="19">
    <location>
        <begin position="15"/>
        <end position="25"/>
    </location>
</feature>
<feature type="helix" evidence="19">
    <location>
        <begin position="29"/>
        <end position="40"/>
    </location>
</feature>
<feature type="strand" evidence="19">
    <location>
        <begin position="43"/>
        <end position="49"/>
    </location>
</feature>
<feature type="helix" evidence="19">
    <location>
        <begin position="50"/>
        <end position="52"/>
    </location>
</feature>
<feature type="strand" evidence="19">
    <location>
        <begin position="56"/>
        <end position="64"/>
    </location>
</feature>
<feature type="strand" evidence="19">
    <location>
        <begin position="67"/>
        <end position="76"/>
    </location>
</feature>
<feature type="helix" evidence="19">
    <location>
        <begin position="80"/>
        <end position="89"/>
    </location>
</feature>
<feature type="strand" evidence="19">
    <location>
        <begin position="91"/>
        <end position="101"/>
    </location>
</feature>
<feature type="helix" evidence="19">
    <location>
        <begin position="103"/>
        <end position="113"/>
    </location>
</feature>
<feature type="strand" evidence="19">
    <location>
        <begin position="117"/>
        <end position="126"/>
    </location>
</feature>
<feature type="strand" evidence="19">
    <location>
        <begin position="129"/>
        <end position="137"/>
    </location>
</feature>
<feature type="strand" evidence="19">
    <location>
        <begin position="143"/>
        <end position="151"/>
    </location>
</feature>
<feature type="strand" evidence="19">
    <location>
        <begin position="154"/>
        <end position="156"/>
    </location>
</feature>
<feature type="helix" evidence="19">
    <location>
        <begin position="170"/>
        <end position="172"/>
    </location>
</feature>
<feature type="strand" evidence="19">
    <location>
        <begin position="178"/>
        <end position="187"/>
    </location>
</feature>
<feature type="helix" evidence="19">
    <location>
        <begin position="193"/>
        <end position="204"/>
    </location>
</feature>
<feature type="strand" evidence="19">
    <location>
        <begin position="207"/>
        <end position="212"/>
    </location>
</feature>
<feature type="turn" evidence="19">
    <location>
        <begin position="214"/>
        <end position="216"/>
    </location>
</feature>
<feature type="helix" evidence="20">
    <location>
        <begin position="219"/>
        <end position="222"/>
    </location>
</feature>
<feature type="strand" evidence="19">
    <location>
        <begin position="223"/>
        <end position="230"/>
    </location>
</feature>
<feature type="strand" evidence="19">
    <location>
        <begin position="237"/>
        <end position="244"/>
    </location>
</feature>
<feature type="helix" evidence="19">
    <location>
        <begin position="251"/>
        <end position="259"/>
    </location>
</feature>
<feature type="strand" evidence="19">
    <location>
        <begin position="261"/>
        <end position="272"/>
    </location>
</feature>
<feature type="helix" evidence="19">
    <location>
        <begin position="274"/>
        <end position="283"/>
    </location>
</feature>
<feature type="helix" evidence="19">
    <location>
        <begin position="293"/>
        <end position="303"/>
    </location>
</feature>
<feature type="helix" evidence="19">
    <location>
        <begin position="314"/>
        <end position="320"/>
    </location>
</feature>
<feature type="strand" evidence="19">
    <location>
        <begin position="323"/>
        <end position="326"/>
    </location>
</feature>
<feature type="strand" evidence="19">
    <location>
        <begin position="331"/>
        <end position="337"/>
    </location>
</feature>
<feature type="strand" evidence="19">
    <location>
        <begin position="340"/>
        <end position="344"/>
    </location>
</feature>
<feature type="strand" evidence="19">
    <location>
        <begin position="347"/>
        <end position="355"/>
    </location>
</feature>
<feature type="helix" evidence="19">
    <location>
        <begin position="361"/>
        <end position="377"/>
    </location>
</feature>
<accession>P32754</accession>
<accession>A0A0B4J1R4</accession>
<accession>A8K461</accession>
<accession>B3KQ63</accession>
<accession>Q13234</accession>